<organism>
    <name type="scientific">Invertebrate iridescent virus 6</name>
    <name type="common">IIV-6</name>
    <name type="synonym">Chilo iridescent virus</name>
    <dbReference type="NCBI Taxonomy" id="176652"/>
    <lineage>
        <taxon>Viruses</taxon>
        <taxon>Varidnaviria</taxon>
        <taxon>Bamfordvirae</taxon>
        <taxon>Nucleocytoviricota</taxon>
        <taxon>Megaviricetes</taxon>
        <taxon>Pimascovirales</taxon>
        <taxon>Iridoviridae</taxon>
        <taxon>Betairidovirinae</taxon>
        <taxon>Iridovirus</taxon>
    </lineage>
</organism>
<dbReference type="EMBL" id="AF303741">
    <property type="protein sequence ID" value="AAK82178.1"/>
    <property type="molecule type" value="Genomic_DNA"/>
</dbReference>
<dbReference type="RefSeq" id="NP_149780.1">
    <property type="nucleotide sequence ID" value="NC_003038.1"/>
</dbReference>
<dbReference type="KEGG" id="vg:1733286"/>
<dbReference type="OrthoDB" id="14662at10239"/>
<dbReference type="Proteomes" id="UP000001359">
    <property type="component" value="Genome"/>
</dbReference>
<accession>Q91FK7</accession>
<feature type="chain" id="PRO_0000377857" description="Uncharacterized protein 317L">
    <location>
        <begin position="1"/>
        <end position="418"/>
    </location>
</feature>
<sequence length="418" mass="43973">MATLIPSFKKDNPFESINDNELIGLTFNDQDGPSNNILWSSSKIVNLIPQGQFQAKQPDAVSGNFAKFGDENNSGQTIDSGILLDDNADPSSNVIWSSEKIAKIPLPPFQLKQLDAVSGNISIFGSDVNLGQVIDSGYSINDSLPPSSQVIWSSNQVQSQLLAVSQAKQPNANAGNLAIFGNGVNNGQAIDSGYSINDLSAPSSNVLYSSGKIYQILPQPQVSFLSGVSPTSTVNPSSNILYVGVDGSSYVWNGSVYNNVFVKSYSKFSSQSPLSVPPGSNISIPFPIVDSSGQSSKGSISISPSGVVTITSLSQASSLYKAKFSGQGLNSGGASIQVSFNFVDQSNQQLGNSSSAFSVSVGGLAINSQCSLEQYFQVPPLGQLSFSVNIVTKLSDPPVILGNVGPIDNPYLIVEQIY</sequence>
<reference key="1">
    <citation type="journal article" date="2001" name="Virology">
        <title>Analysis of the first complete DNA sequence of an invertebrate iridovirus: coding strategy of the genome of Chilo iridescent virus.</title>
        <authorList>
            <person name="Jakob N.J."/>
            <person name="Mueller K."/>
            <person name="Bahr U."/>
            <person name="Darai G."/>
        </authorList>
    </citation>
    <scope>NUCLEOTIDE SEQUENCE [LARGE SCALE GENOMIC DNA]</scope>
</reference>
<reference key="2">
    <citation type="journal article" date="2007" name="Virol. J.">
        <title>Comparative genomic analysis of the family Iridoviridae: re-annotating and defining the core set of iridovirus genes.</title>
        <authorList>
            <person name="Eaton H.E."/>
            <person name="Metcalf J."/>
            <person name="Penny E."/>
            <person name="Tcherepanov V."/>
            <person name="Upton C."/>
            <person name="Brunetti C.R."/>
        </authorList>
    </citation>
    <scope>GENOME REANNOTATION</scope>
</reference>
<protein>
    <recommendedName>
        <fullName>Uncharacterized protein 317L</fullName>
    </recommendedName>
</protein>
<keyword id="KW-1185">Reference proteome</keyword>
<name>317L_IIV6</name>
<proteinExistence type="predicted"/>
<organismHost>
    <name type="scientific">Acheta domesticus</name>
    <name type="common">House cricket</name>
    <dbReference type="NCBI Taxonomy" id="6997"/>
</organismHost>
<organismHost>
    <name type="scientific">Chilo suppressalis</name>
    <name type="common">Asiatic rice borer moth</name>
    <dbReference type="NCBI Taxonomy" id="168631"/>
</organismHost>
<organismHost>
    <name type="scientific">Gryllus bimaculatus</name>
    <name type="common">Two-spotted cricket</name>
    <dbReference type="NCBI Taxonomy" id="6999"/>
</organismHost>
<organismHost>
    <name type="scientific">Gryllus campestris</name>
    <dbReference type="NCBI Taxonomy" id="58607"/>
</organismHost>
<organismHost>
    <name type="scientific">Spodoptera frugiperda</name>
    <name type="common">Fall armyworm</name>
    <dbReference type="NCBI Taxonomy" id="7108"/>
</organismHost>
<gene>
    <name type="ORF">IIV6-317L</name>
</gene>